<reference key="1">
    <citation type="journal article" date="2006" name="Proc. Natl. Acad. Sci. U.S.A.">
        <title>Comparative genomics of the lactic acid bacteria.</title>
        <authorList>
            <person name="Makarova K.S."/>
            <person name="Slesarev A."/>
            <person name="Wolf Y.I."/>
            <person name="Sorokin A."/>
            <person name="Mirkin B."/>
            <person name="Koonin E.V."/>
            <person name="Pavlov A."/>
            <person name="Pavlova N."/>
            <person name="Karamychev V."/>
            <person name="Polouchine N."/>
            <person name="Shakhova V."/>
            <person name="Grigoriev I."/>
            <person name="Lou Y."/>
            <person name="Rohksar D."/>
            <person name="Lucas S."/>
            <person name="Huang K."/>
            <person name="Goodstein D.M."/>
            <person name="Hawkins T."/>
            <person name="Plengvidhya V."/>
            <person name="Welker D."/>
            <person name="Hughes J."/>
            <person name="Goh Y."/>
            <person name="Benson A."/>
            <person name="Baldwin K."/>
            <person name="Lee J.-H."/>
            <person name="Diaz-Muniz I."/>
            <person name="Dosti B."/>
            <person name="Smeianov V."/>
            <person name="Wechter W."/>
            <person name="Barabote R."/>
            <person name="Lorca G."/>
            <person name="Altermann E."/>
            <person name="Barrangou R."/>
            <person name="Ganesan B."/>
            <person name="Xie Y."/>
            <person name="Rawsthorne H."/>
            <person name="Tamir D."/>
            <person name="Parker C."/>
            <person name="Breidt F."/>
            <person name="Broadbent J.R."/>
            <person name="Hutkins R."/>
            <person name="O'Sullivan D."/>
            <person name="Steele J."/>
            <person name="Unlu G."/>
            <person name="Saier M.H. Jr."/>
            <person name="Klaenhammer T."/>
            <person name="Richardson P."/>
            <person name="Kozyavkin S."/>
            <person name="Weimer B.C."/>
            <person name="Mills D.A."/>
        </authorList>
    </citation>
    <scope>NUCLEOTIDE SEQUENCE [LARGE SCALE GENOMIC DNA]</scope>
    <source>
        <strain>ATCC 25745 / CCUG 21536 / LMG 10740 / 183-1w</strain>
    </source>
</reference>
<protein>
    <recommendedName>
        <fullName evidence="1">Membrane protein insertase YidC</fullName>
    </recommendedName>
    <alternativeName>
        <fullName evidence="1">Foldase YidC</fullName>
    </alternativeName>
    <alternativeName>
        <fullName evidence="1">Membrane integrase YidC</fullName>
    </alternativeName>
    <alternativeName>
        <fullName evidence="1">Membrane protein YidC</fullName>
    </alternativeName>
</protein>
<organism>
    <name type="scientific">Pediococcus pentosaceus (strain ATCC 25745 / CCUG 21536 / LMG 10740 / 183-1w)</name>
    <dbReference type="NCBI Taxonomy" id="278197"/>
    <lineage>
        <taxon>Bacteria</taxon>
        <taxon>Bacillati</taxon>
        <taxon>Bacillota</taxon>
        <taxon>Bacilli</taxon>
        <taxon>Lactobacillales</taxon>
        <taxon>Lactobacillaceae</taxon>
        <taxon>Pediococcus</taxon>
    </lineage>
</organism>
<sequence length="279" mass="31668">MKHLKRNMALLSVAALSFILTACSTAPITSHSTGIWDGVIVYNFSRFIIYLSKLFGGNYGWGIIVFTIIIRIIILPLMIYQTRTTMKTAELQPKLKQLQQKYSSRDAESQQKLREEQQKLYAEAGVNPMAGCLPLIIQLPVMYALYAAVSRTQVLKEGTFLWLQLSDKDPYFILPILAALFTFMSTWLSMKSQPAGSQNGMTSAMTFGMPLVILITALNFPAAITLYWVVTNLFQVGQTLIIQNPFKIQKEREEKIQTEKAKRKAIEKAKRRAMKSKRK</sequence>
<dbReference type="EMBL" id="CP000422">
    <property type="protein sequence ID" value="ABJ68864.1"/>
    <property type="molecule type" value="Genomic_DNA"/>
</dbReference>
<dbReference type="RefSeq" id="WP_002833857.1">
    <property type="nucleotide sequence ID" value="NC_008525.1"/>
</dbReference>
<dbReference type="SMR" id="Q03D58"/>
<dbReference type="STRING" id="278197.PEPE_1845"/>
<dbReference type="GeneID" id="33061888"/>
<dbReference type="KEGG" id="ppe:PEPE_1845"/>
<dbReference type="eggNOG" id="COG0706">
    <property type="taxonomic scope" value="Bacteria"/>
</dbReference>
<dbReference type="HOGENOM" id="CLU_036138_5_0_9"/>
<dbReference type="OrthoDB" id="9780552at2"/>
<dbReference type="Proteomes" id="UP000000773">
    <property type="component" value="Chromosome"/>
</dbReference>
<dbReference type="GO" id="GO:0005886">
    <property type="term" value="C:plasma membrane"/>
    <property type="evidence" value="ECO:0007669"/>
    <property type="project" value="UniProtKB-SubCell"/>
</dbReference>
<dbReference type="GO" id="GO:0032977">
    <property type="term" value="F:membrane insertase activity"/>
    <property type="evidence" value="ECO:0007669"/>
    <property type="project" value="InterPro"/>
</dbReference>
<dbReference type="GO" id="GO:0051205">
    <property type="term" value="P:protein insertion into membrane"/>
    <property type="evidence" value="ECO:0007669"/>
    <property type="project" value="TreeGrafter"/>
</dbReference>
<dbReference type="GO" id="GO:0015031">
    <property type="term" value="P:protein transport"/>
    <property type="evidence" value="ECO:0007669"/>
    <property type="project" value="UniProtKB-KW"/>
</dbReference>
<dbReference type="CDD" id="cd20070">
    <property type="entry name" value="5TM_YidC_Alb3"/>
    <property type="match status" value="1"/>
</dbReference>
<dbReference type="HAMAP" id="MF_01811">
    <property type="entry name" value="YidC_type2"/>
    <property type="match status" value="1"/>
</dbReference>
<dbReference type="InterPro" id="IPR001708">
    <property type="entry name" value="YidC/ALB3/OXA1/COX18"/>
</dbReference>
<dbReference type="InterPro" id="IPR028055">
    <property type="entry name" value="YidC/Oxa/ALB_C"/>
</dbReference>
<dbReference type="InterPro" id="IPR023060">
    <property type="entry name" value="YidC/YidC1/YidC2_Firmicutes"/>
</dbReference>
<dbReference type="InterPro" id="IPR047196">
    <property type="entry name" value="YidC_ALB_C"/>
</dbReference>
<dbReference type="NCBIfam" id="TIGR03592">
    <property type="entry name" value="yidC_oxa1_cterm"/>
    <property type="match status" value="1"/>
</dbReference>
<dbReference type="PANTHER" id="PTHR12428:SF65">
    <property type="entry name" value="CYTOCHROME C OXIDASE ASSEMBLY PROTEIN COX18, MITOCHONDRIAL"/>
    <property type="match status" value="1"/>
</dbReference>
<dbReference type="PANTHER" id="PTHR12428">
    <property type="entry name" value="OXA1"/>
    <property type="match status" value="1"/>
</dbReference>
<dbReference type="Pfam" id="PF02096">
    <property type="entry name" value="60KD_IMP"/>
    <property type="match status" value="1"/>
</dbReference>
<dbReference type="PROSITE" id="PS51257">
    <property type="entry name" value="PROKAR_LIPOPROTEIN"/>
    <property type="match status" value="1"/>
</dbReference>
<accession>Q03D58</accession>
<comment type="function">
    <text evidence="1">Required for the insertion and/or proper folding and/or complex formation of integral membrane proteins into the membrane. Involved in integration of membrane proteins that insert both dependently and independently of the Sec translocase complex, as well as at least some lipoproteins.</text>
</comment>
<comment type="subcellular location">
    <subcellularLocation>
        <location evidence="1">Cell membrane</location>
        <topology evidence="1">Multi-pass membrane protein</topology>
    </subcellularLocation>
</comment>
<comment type="similarity">
    <text evidence="1">Belongs to the OXA1/ALB3/YidC family. Type 2 subfamily.</text>
</comment>
<proteinExistence type="inferred from homology"/>
<keyword id="KW-1003">Cell membrane</keyword>
<keyword id="KW-0143">Chaperone</keyword>
<keyword id="KW-0449">Lipoprotein</keyword>
<keyword id="KW-0472">Membrane</keyword>
<keyword id="KW-0564">Palmitate</keyword>
<keyword id="KW-0653">Protein transport</keyword>
<keyword id="KW-0732">Signal</keyword>
<keyword id="KW-0812">Transmembrane</keyword>
<keyword id="KW-1133">Transmembrane helix</keyword>
<keyword id="KW-0813">Transport</keyword>
<name>YIDC_PEDPA</name>
<gene>
    <name evidence="1" type="primary">yidC</name>
    <name type="ordered locus">PEPE_1845</name>
</gene>
<evidence type="ECO:0000255" key="1">
    <source>
        <dbReference type="HAMAP-Rule" id="MF_01811"/>
    </source>
</evidence>
<evidence type="ECO:0000256" key="2">
    <source>
        <dbReference type="SAM" id="MobiDB-lite"/>
    </source>
</evidence>
<feature type="signal peptide" evidence="1">
    <location>
        <begin position="1"/>
        <end position="22"/>
    </location>
</feature>
<feature type="chain" id="PRO_1000070192" description="Membrane protein insertase YidC">
    <location>
        <begin position="23"/>
        <end position="279"/>
    </location>
</feature>
<feature type="transmembrane region" description="Helical" evidence="1">
    <location>
        <begin position="35"/>
        <end position="55"/>
    </location>
</feature>
<feature type="transmembrane region" description="Helical" evidence="1">
    <location>
        <begin position="59"/>
        <end position="79"/>
    </location>
</feature>
<feature type="transmembrane region" description="Helical" evidence="1">
    <location>
        <begin position="129"/>
        <end position="149"/>
    </location>
</feature>
<feature type="transmembrane region" description="Helical" evidence="1">
    <location>
        <begin position="170"/>
        <end position="190"/>
    </location>
</feature>
<feature type="transmembrane region" description="Helical" evidence="1">
    <location>
        <begin position="210"/>
        <end position="230"/>
    </location>
</feature>
<feature type="region of interest" description="Disordered" evidence="2">
    <location>
        <begin position="253"/>
        <end position="279"/>
    </location>
</feature>
<feature type="compositionally biased region" description="Basic and acidic residues" evidence="2">
    <location>
        <begin position="253"/>
        <end position="268"/>
    </location>
</feature>
<feature type="compositionally biased region" description="Basic residues" evidence="2">
    <location>
        <begin position="269"/>
        <end position="279"/>
    </location>
</feature>
<feature type="lipid moiety-binding region" description="N-palmitoyl cysteine" evidence="1">
    <location>
        <position position="23"/>
    </location>
</feature>
<feature type="lipid moiety-binding region" description="S-diacylglycerol cysteine" evidence="1">
    <location>
        <position position="23"/>
    </location>
</feature>